<sequence>MPEGKIVKALSGFYYVQHEEGITQCRGRGVFRKNKITPLVGDQVVFQADNPSEGYVLEVFDRKNELVRPPIANVDQAILVFSAVEPDFNPGLLDRFLVLIEYHNIKPIICISKMDLVDEKMRETVESYANDYREMGYDVLFTSINTSESIDILKPFLEGCVSVVAGQSGVGKSSMLNVLRPELELKTNDISSHLGRGKHTTRHVELIAIGSGLVADTPGFSSLDFIDIEVEDLTYCFPELKEASQYCKFRGCTHLSEPKCAVKAAVEEGKITEYRYKNYKQFVEEIRERKPRY</sequence>
<dbReference type="EC" id="3.6.1.-" evidence="1"/>
<dbReference type="EMBL" id="AE017194">
    <property type="protein sequence ID" value="AAS42808.1"/>
    <property type="molecule type" value="Genomic_DNA"/>
</dbReference>
<dbReference type="SMR" id="Q732K9"/>
<dbReference type="KEGG" id="bca:BCE_3903"/>
<dbReference type="HOGENOM" id="CLU_033617_2_1_9"/>
<dbReference type="Proteomes" id="UP000002527">
    <property type="component" value="Chromosome"/>
</dbReference>
<dbReference type="GO" id="GO:0005737">
    <property type="term" value="C:cytoplasm"/>
    <property type="evidence" value="ECO:0007669"/>
    <property type="project" value="UniProtKB-SubCell"/>
</dbReference>
<dbReference type="GO" id="GO:0005525">
    <property type="term" value="F:GTP binding"/>
    <property type="evidence" value="ECO:0007669"/>
    <property type="project" value="UniProtKB-UniRule"/>
</dbReference>
<dbReference type="GO" id="GO:0003924">
    <property type="term" value="F:GTPase activity"/>
    <property type="evidence" value="ECO:0007669"/>
    <property type="project" value="UniProtKB-UniRule"/>
</dbReference>
<dbReference type="GO" id="GO:0046872">
    <property type="term" value="F:metal ion binding"/>
    <property type="evidence" value="ECO:0007669"/>
    <property type="project" value="UniProtKB-KW"/>
</dbReference>
<dbReference type="GO" id="GO:0019843">
    <property type="term" value="F:rRNA binding"/>
    <property type="evidence" value="ECO:0007669"/>
    <property type="project" value="UniProtKB-KW"/>
</dbReference>
<dbReference type="GO" id="GO:0042274">
    <property type="term" value="P:ribosomal small subunit biogenesis"/>
    <property type="evidence" value="ECO:0007669"/>
    <property type="project" value="UniProtKB-UniRule"/>
</dbReference>
<dbReference type="CDD" id="cd04466">
    <property type="entry name" value="S1_YloQ_GTPase"/>
    <property type="match status" value="1"/>
</dbReference>
<dbReference type="CDD" id="cd01854">
    <property type="entry name" value="YjeQ_EngC"/>
    <property type="match status" value="1"/>
</dbReference>
<dbReference type="Gene3D" id="2.40.50.140">
    <property type="entry name" value="Nucleic acid-binding proteins"/>
    <property type="match status" value="1"/>
</dbReference>
<dbReference type="Gene3D" id="3.40.50.300">
    <property type="entry name" value="P-loop containing nucleotide triphosphate hydrolases"/>
    <property type="match status" value="1"/>
</dbReference>
<dbReference type="Gene3D" id="1.10.40.50">
    <property type="entry name" value="Probable gtpase engc, domain 3"/>
    <property type="match status" value="1"/>
</dbReference>
<dbReference type="HAMAP" id="MF_01820">
    <property type="entry name" value="GTPase_RsgA"/>
    <property type="match status" value="1"/>
</dbReference>
<dbReference type="InterPro" id="IPR030378">
    <property type="entry name" value="G_CP_dom"/>
</dbReference>
<dbReference type="InterPro" id="IPR012340">
    <property type="entry name" value="NA-bd_OB-fold"/>
</dbReference>
<dbReference type="InterPro" id="IPR027417">
    <property type="entry name" value="P-loop_NTPase"/>
</dbReference>
<dbReference type="InterPro" id="IPR004881">
    <property type="entry name" value="Ribosome_biogen_GTPase_RsgA"/>
</dbReference>
<dbReference type="InterPro" id="IPR010914">
    <property type="entry name" value="RsgA_GTPase_dom"/>
</dbReference>
<dbReference type="InterPro" id="IPR031944">
    <property type="entry name" value="RsgA_N"/>
</dbReference>
<dbReference type="NCBIfam" id="TIGR00157">
    <property type="entry name" value="ribosome small subunit-dependent GTPase A"/>
    <property type="match status" value="1"/>
</dbReference>
<dbReference type="PANTHER" id="PTHR32120">
    <property type="entry name" value="SMALL RIBOSOMAL SUBUNIT BIOGENESIS GTPASE RSGA"/>
    <property type="match status" value="1"/>
</dbReference>
<dbReference type="PANTHER" id="PTHR32120:SF11">
    <property type="entry name" value="SMALL RIBOSOMAL SUBUNIT BIOGENESIS GTPASE RSGA 1, MITOCHONDRIAL-RELATED"/>
    <property type="match status" value="1"/>
</dbReference>
<dbReference type="Pfam" id="PF03193">
    <property type="entry name" value="RsgA_GTPase"/>
    <property type="match status" value="1"/>
</dbReference>
<dbReference type="Pfam" id="PF16745">
    <property type="entry name" value="RsgA_N"/>
    <property type="match status" value="1"/>
</dbReference>
<dbReference type="SUPFAM" id="SSF50249">
    <property type="entry name" value="Nucleic acid-binding proteins"/>
    <property type="match status" value="1"/>
</dbReference>
<dbReference type="SUPFAM" id="SSF52540">
    <property type="entry name" value="P-loop containing nucleoside triphosphate hydrolases"/>
    <property type="match status" value="1"/>
</dbReference>
<dbReference type="PROSITE" id="PS50936">
    <property type="entry name" value="ENGC_GTPASE"/>
    <property type="match status" value="1"/>
</dbReference>
<dbReference type="PROSITE" id="PS51721">
    <property type="entry name" value="G_CP"/>
    <property type="match status" value="1"/>
</dbReference>
<reference key="1">
    <citation type="journal article" date="2004" name="Nucleic Acids Res.">
        <title>The genome sequence of Bacillus cereus ATCC 10987 reveals metabolic adaptations and a large plasmid related to Bacillus anthracis pXO1.</title>
        <authorList>
            <person name="Rasko D.A."/>
            <person name="Ravel J."/>
            <person name="Oekstad O.A."/>
            <person name="Helgason E."/>
            <person name="Cer R.Z."/>
            <person name="Jiang L."/>
            <person name="Shores K.A."/>
            <person name="Fouts D.E."/>
            <person name="Tourasse N.J."/>
            <person name="Angiuoli S.V."/>
            <person name="Kolonay J.F."/>
            <person name="Nelson W.C."/>
            <person name="Kolstoe A.-B."/>
            <person name="Fraser C.M."/>
            <person name="Read T.D."/>
        </authorList>
    </citation>
    <scope>NUCLEOTIDE SEQUENCE [LARGE SCALE GENOMIC DNA]</scope>
    <source>
        <strain>ATCC 10987 / NRS 248</strain>
    </source>
</reference>
<comment type="function">
    <text evidence="1">One of several proteins that assist in the late maturation steps of the functional core of the 30S ribosomal subunit. Helps release RbfA from mature subunits. May play a role in the assembly of ribosomal proteins into the subunit. Circularly permuted GTPase that catalyzes slow GTP hydrolysis, GTPase activity is stimulated by the 30S ribosomal subunit.</text>
</comment>
<comment type="cofactor">
    <cofactor evidence="1">
        <name>Zn(2+)</name>
        <dbReference type="ChEBI" id="CHEBI:29105"/>
    </cofactor>
    <text evidence="1">Binds 1 zinc ion per subunit.</text>
</comment>
<comment type="subunit">
    <text evidence="1">Monomer. Associates with 30S ribosomal subunit, binds 16S rRNA.</text>
</comment>
<comment type="subcellular location">
    <subcellularLocation>
        <location evidence="1">Cytoplasm</location>
    </subcellularLocation>
</comment>
<comment type="similarity">
    <text evidence="1">Belongs to the TRAFAC class YlqF/YawG GTPase family. RsgA subfamily.</text>
</comment>
<organism>
    <name type="scientific">Bacillus cereus (strain ATCC 10987 / NRS 248)</name>
    <dbReference type="NCBI Taxonomy" id="222523"/>
    <lineage>
        <taxon>Bacteria</taxon>
        <taxon>Bacillati</taxon>
        <taxon>Bacillota</taxon>
        <taxon>Bacilli</taxon>
        <taxon>Bacillales</taxon>
        <taxon>Bacillaceae</taxon>
        <taxon>Bacillus</taxon>
        <taxon>Bacillus cereus group</taxon>
    </lineage>
</organism>
<accession>Q732K9</accession>
<gene>
    <name evidence="1" type="primary">rsgA</name>
    <name type="ordered locus">BCE_3903</name>
</gene>
<proteinExistence type="inferred from homology"/>
<protein>
    <recommendedName>
        <fullName evidence="1">Small ribosomal subunit biogenesis GTPase RsgA</fullName>
        <ecNumber evidence="1">3.6.1.-</ecNumber>
    </recommendedName>
</protein>
<evidence type="ECO:0000255" key="1">
    <source>
        <dbReference type="HAMAP-Rule" id="MF_01820"/>
    </source>
</evidence>
<evidence type="ECO:0000255" key="2">
    <source>
        <dbReference type="PROSITE-ProRule" id="PRU01058"/>
    </source>
</evidence>
<name>RSGA_BACC1</name>
<keyword id="KW-0963">Cytoplasm</keyword>
<keyword id="KW-0342">GTP-binding</keyword>
<keyword id="KW-0378">Hydrolase</keyword>
<keyword id="KW-0479">Metal-binding</keyword>
<keyword id="KW-0547">Nucleotide-binding</keyword>
<keyword id="KW-0690">Ribosome biogenesis</keyword>
<keyword id="KW-0694">RNA-binding</keyword>
<keyword id="KW-0699">rRNA-binding</keyword>
<keyword id="KW-0862">Zinc</keyword>
<feature type="chain" id="PRO_0000171461" description="Small ribosomal subunit biogenesis GTPase RsgA">
    <location>
        <begin position="1"/>
        <end position="293"/>
    </location>
</feature>
<feature type="domain" description="CP-type G" evidence="2">
    <location>
        <begin position="63"/>
        <end position="223"/>
    </location>
</feature>
<feature type="binding site" evidence="1">
    <location>
        <begin position="112"/>
        <end position="115"/>
    </location>
    <ligand>
        <name>GTP</name>
        <dbReference type="ChEBI" id="CHEBI:37565"/>
    </ligand>
</feature>
<feature type="binding site" evidence="1">
    <location>
        <begin position="166"/>
        <end position="174"/>
    </location>
    <ligand>
        <name>GTP</name>
        <dbReference type="ChEBI" id="CHEBI:37565"/>
    </ligand>
</feature>
<feature type="binding site" evidence="1">
    <location>
        <position position="247"/>
    </location>
    <ligand>
        <name>Zn(2+)</name>
        <dbReference type="ChEBI" id="CHEBI:29105"/>
    </ligand>
</feature>
<feature type="binding site" evidence="1">
    <location>
        <position position="252"/>
    </location>
    <ligand>
        <name>Zn(2+)</name>
        <dbReference type="ChEBI" id="CHEBI:29105"/>
    </ligand>
</feature>
<feature type="binding site" evidence="1">
    <location>
        <position position="254"/>
    </location>
    <ligand>
        <name>Zn(2+)</name>
        <dbReference type="ChEBI" id="CHEBI:29105"/>
    </ligand>
</feature>
<feature type="binding site" evidence="1">
    <location>
        <position position="260"/>
    </location>
    <ligand>
        <name>Zn(2+)</name>
        <dbReference type="ChEBI" id="CHEBI:29105"/>
    </ligand>
</feature>